<reference key="1">
    <citation type="submission" date="2007-08" db="EMBL/GenBank/DDBJ databases">
        <authorList>
            <consortium name="The Citrobacter koseri Genome Sequencing Project"/>
            <person name="McClelland M."/>
            <person name="Sanderson E.K."/>
            <person name="Porwollik S."/>
            <person name="Spieth J."/>
            <person name="Clifton W.S."/>
            <person name="Latreille P."/>
            <person name="Courtney L."/>
            <person name="Wang C."/>
            <person name="Pepin K."/>
            <person name="Bhonagiri V."/>
            <person name="Nash W."/>
            <person name="Johnson M."/>
            <person name="Thiruvilangam P."/>
            <person name="Wilson R."/>
        </authorList>
    </citation>
    <scope>NUCLEOTIDE SEQUENCE [LARGE SCALE GENOMIC DNA]</scope>
    <source>
        <strain>ATCC BAA-895 / CDC 4225-83 / SGSC4696</strain>
    </source>
</reference>
<name>Y1577_CITK8</name>
<gene>
    <name type="ordered locus">CKO_01577</name>
</gene>
<accession>A8AGU6</accession>
<dbReference type="EMBL" id="CP000822">
    <property type="protein sequence ID" value="ABV12709.1"/>
    <property type="molecule type" value="Genomic_DNA"/>
</dbReference>
<dbReference type="RefSeq" id="WP_012132450.1">
    <property type="nucleotide sequence ID" value="NC_009792.1"/>
</dbReference>
<dbReference type="STRING" id="290338.CKO_01577"/>
<dbReference type="GeneID" id="45135635"/>
<dbReference type="KEGG" id="cko:CKO_01577"/>
<dbReference type="HOGENOM" id="CLU_167574_0_0_6"/>
<dbReference type="OrthoDB" id="6455281at2"/>
<dbReference type="Proteomes" id="UP000008148">
    <property type="component" value="Chromosome"/>
</dbReference>
<dbReference type="HAMAP" id="MF_01581">
    <property type="entry name" value="UPF0482"/>
    <property type="match status" value="1"/>
</dbReference>
<dbReference type="InterPro" id="IPR009700">
    <property type="entry name" value="DUF1283"/>
</dbReference>
<dbReference type="NCBIfam" id="NF010180">
    <property type="entry name" value="PRK13659.1"/>
    <property type="match status" value="1"/>
</dbReference>
<dbReference type="Pfam" id="PF06932">
    <property type="entry name" value="DUF1283"/>
    <property type="match status" value="1"/>
</dbReference>
<keyword id="KW-1185">Reference proteome</keyword>
<keyword id="KW-0732">Signal</keyword>
<proteinExistence type="inferred from homology"/>
<feature type="signal peptide" evidence="1">
    <location>
        <begin position="1"/>
        <end position="28"/>
    </location>
</feature>
<feature type="chain" id="PRO_0000349091" description="UPF0482 protein CKO_01577">
    <location>
        <begin position="29"/>
        <end position="113"/>
    </location>
</feature>
<feature type="region of interest" description="Disordered" evidence="2">
    <location>
        <begin position="44"/>
        <end position="67"/>
    </location>
</feature>
<feature type="compositionally biased region" description="Basic and acidic residues" evidence="2">
    <location>
        <begin position="47"/>
        <end position="59"/>
    </location>
</feature>
<comment type="similarity">
    <text evidence="1">Belongs to the UPF0482 family.</text>
</comment>
<protein>
    <recommendedName>
        <fullName evidence="1">UPF0482 protein CKO_01577</fullName>
    </recommendedName>
</protein>
<evidence type="ECO:0000255" key="1">
    <source>
        <dbReference type="HAMAP-Rule" id="MF_01581"/>
    </source>
</evidence>
<evidence type="ECO:0000256" key="2">
    <source>
        <dbReference type="SAM" id="MobiDB-lite"/>
    </source>
</evidence>
<organism>
    <name type="scientific">Citrobacter koseri (strain ATCC BAA-895 / CDC 4225-83 / SGSC4696)</name>
    <dbReference type="NCBI Taxonomy" id="290338"/>
    <lineage>
        <taxon>Bacteria</taxon>
        <taxon>Pseudomonadati</taxon>
        <taxon>Pseudomonadota</taxon>
        <taxon>Gammaproteobacteria</taxon>
        <taxon>Enterobacterales</taxon>
        <taxon>Enterobacteriaceae</taxon>
        <taxon>Citrobacter</taxon>
    </lineage>
</organism>
<sequence>MNNTLSKRLCLTAMLALGAVVYTTSAFANTSKLIIESGDSAQSRQHAAMEKEQWNDTRSLRQKVNTRTEKEWDKADAAFDNRDKCEQSANLNAYWEPNTLRCLDRRTGRTVAP</sequence>